<evidence type="ECO:0000255" key="1">
    <source>
        <dbReference type="PROSITE-ProRule" id="PRU01088"/>
    </source>
</evidence>
<evidence type="ECO:0000256" key="2">
    <source>
        <dbReference type="SAM" id="MobiDB-lite"/>
    </source>
</evidence>
<evidence type="ECO:0000305" key="3"/>
<proteinExistence type="evidence at transcript level"/>
<name>JAL46_ARATH</name>
<feature type="chain" id="PRO_0000430403" description="Jacalin-related lectin 46">
    <location>
        <begin position="1"/>
        <end position="596"/>
    </location>
</feature>
<feature type="domain" description="Jacalin-type lectin 1" evidence="1">
    <location>
        <begin position="2"/>
        <end position="143"/>
    </location>
</feature>
<feature type="domain" description="Jacalin-type lectin 2" evidence="1">
    <location>
        <begin position="146"/>
        <end position="291"/>
    </location>
</feature>
<feature type="domain" description="Jacalin-type lectin 3" evidence="1">
    <location>
        <begin position="294"/>
        <end position="439"/>
    </location>
</feature>
<feature type="domain" description="Jacalin-type lectin 4" evidence="1">
    <location>
        <begin position="446"/>
        <end position="592"/>
    </location>
</feature>
<feature type="region of interest" description="Disordered" evidence="2">
    <location>
        <begin position="1"/>
        <end position="20"/>
    </location>
</feature>
<protein>
    <recommendedName>
        <fullName>Jacalin-related lectin 46</fullName>
    </recommendedName>
</protein>
<accession>Q9LTA8</accession>
<gene>
    <name type="primary">JAL46</name>
    <name type="ordered locus">At5g49850</name>
    <name type="ORF">K21G20.6</name>
</gene>
<organism>
    <name type="scientific">Arabidopsis thaliana</name>
    <name type="common">Mouse-ear cress</name>
    <dbReference type="NCBI Taxonomy" id="3702"/>
    <lineage>
        <taxon>Eukaryota</taxon>
        <taxon>Viridiplantae</taxon>
        <taxon>Streptophyta</taxon>
        <taxon>Embryophyta</taxon>
        <taxon>Tracheophyta</taxon>
        <taxon>Spermatophyta</taxon>
        <taxon>Magnoliopsida</taxon>
        <taxon>eudicotyledons</taxon>
        <taxon>Gunneridae</taxon>
        <taxon>Pentapetalae</taxon>
        <taxon>rosids</taxon>
        <taxon>malvids</taxon>
        <taxon>Brassicales</taxon>
        <taxon>Brassicaceae</taxon>
        <taxon>Camelineae</taxon>
        <taxon>Arabidopsis</taxon>
    </lineage>
</organism>
<reference key="1">
    <citation type="submission" date="1999-04" db="EMBL/GenBank/DDBJ databases">
        <title>Structural analysis of Arabidopsis thaliana chromosome 5. XI.</title>
        <authorList>
            <person name="Kaneko T."/>
            <person name="Katoh T."/>
            <person name="Asamizu E."/>
            <person name="Sato S."/>
            <person name="Nakamura Y."/>
            <person name="Kotani H."/>
            <person name="Tabata S."/>
        </authorList>
    </citation>
    <scope>NUCLEOTIDE SEQUENCE [LARGE SCALE GENOMIC DNA]</scope>
</reference>
<reference key="2">
    <citation type="journal article" date="2017" name="Plant J.">
        <title>Araport11: a complete reannotation of the Arabidopsis thaliana reference genome.</title>
        <authorList>
            <person name="Cheng C.Y."/>
            <person name="Krishnakumar V."/>
            <person name="Chan A.P."/>
            <person name="Thibaud-Nissen F."/>
            <person name="Schobel S."/>
            <person name="Town C.D."/>
        </authorList>
    </citation>
    <scope>GENOME REANNOTATION</scope>
    <source>
        <strain>cv. Columbia</strain>
    </source>
</reference>
<reference key="3">
    <citation type="journal article" date="2003" name="Science">
        <title>Empirical analysis of transcriptional activity in the Arabidopsis genome.</title>
        <authorList>
            <person name="Yamada K."/>
            <person name="Lim J."/>
            <person name="Dale J.M."/>
            <person name="Chen H."/>
            <person name="Shinn P."/>
            <person name="Palm C.J."/>
            <person name="Southwick A.M."/>
            <person name="Wu H.C."/>
            <person name="Kim C.J."/>
            <person name="Nguyen M."/>
            <person name="Pham P.K."/>
            <person name="Cheuk R.F."/>
            <person name="Karlin-Newmann G."/>
            <person name="Liu S.X."/>
            <person name="Lam B."/>
            <person name="Sakano H."/>
            <person name="Wu T."/>
            <person name="Yu G."/>
            <person name="Miranda M."/>
            <person name="Quach H.L."/>
            <person name="Tripp M."/>
            <person name="Chang C.H."/>
            <person name="Lee J.M."/>
            <person name="Toriumi M.J."/>
            <person name="Chan M.M."/>
            <person name="Tang C.C."/>
            <person name="Onodera C.S."/>
            <person name="Deng J.M."/>
            <person name="Akiyama K."/>
            <person name="Ansari Y."/>
            <person name="Arakawa T."/>
            <person name="Banh J."/>
            <person name="Banno F."/>
            <person name="Bowser L."/>
            <person name="Brooks S.Y."/>
            <person name="Carninci P."/>
            <person name="Chao Q."/>
            <person name="Choy N."/>
            <person name="Enju A."/>
            <person name="Goldsmith A.D."/>
            <person name="Gurjal M."/>
            <person name="Hansen N.F."/>
            <person name="Hayashizaki Y."/>
            <person name="Johnson-Hopson C."/>
            <person name="Hsuan V.W."/>
            <person name="Iida K."/>
            <person name="Karnes M."/>
            <person name="Khan S."/>
            <person name="Koesema E."/>
            <person name="Ishida J."/>
            <person name="Jiang P.X."/>
            <person name="Jones T."/>
            <person name="Kawai J."/>
            <person name="Kamiya A."/>
            <person name="Meyers C."/>
            <person name="Nakajima M."/>
            <person name="Narusaka M."/>
            <person name="Seki M."/>
            <person name="Sakurai T."/>
            <person name="Satou M."/>
            <person name="Tamse R."/>
            <person name="Vaysberg M."/>
            <person name="Wallender E.K."/>
            <person name="Wong C."/>
            <person name="Yamamura Y."/>
            <person name="Yuan S."/>
            <person name="Shinozaki K."/>
            <person name="Davis R.W."/>
            <person name="Theologis A."/>
            <person name="Ecker J.R."/>
        </authorList>
    </citation>
    <scope>NUCLEOTIDE SEQUENCE [LARGE SCALE MRNA]</scope>
    <source>
        <strain>cv. Columbia</strain>
    </source>
</reference>
<reference key="4">
    <citation type="submission" date="2006-07" db="EMBL/GenBank/DDBJ databases">
        <title>Large-scale analysis of RIKEN Arabidopsis full-length (RAFL) cDNAs.</title>
        <authorList>
            <person name="Totoki Y."/>
            <person name="Seki M."/>
            <person name="Ishida J."/>
            <person name="Nakajima M."/>
            <person name="Enju A."/>
            <person name="Morosawa T."/>
            <person name="Kamiya A."/>
            <person name="Narusaka M."/>
            <person name="Shin-i T."/>
            <person name="Nakagawa M."/>
            <person name="Sakamoto N."/>
            <person name="Oishi K."/>
            <person name="Kohara Y."/>
            <person name="Kobayashi M."/>
            <person name="Toyoda A."/>
            <person name="Sakaki Y."/>
            <person name="Sakurai T."/>
            <person name="Iida K."/>
            <person name="Akiyama K."/>
            <person name="Satou M."/>
            <person name="Toyoda T."/>
            <person name="Konagaya A."/>
            <person name="Carninci P."/>
            <person name="Kawai J."/>
            <person name="Hayashizaki Y."/>
            <person name="Shinozaki K."/>
        </authorList>
    </citation>
    <scope>NUCLEOTIDE SEQUENCE [LARGE SCALE MRNA]</scope>
</reference>
<reference key="5">
    <citation type="journal article" date="2008" name="Plant Cell Physiol.">
        <title>Antagonistic jacalin-related lectins regulate the size of ER body-type beta-glucosidase complexes in Arabidopsis thaliana.</title>
        <authorList>
            <person name="Nagano A.J."/>
            <person name="Fukao Y."/>
            <person name="Fujiwara M."/>
            <person name="Nishimura M."/>
            <person name="Hara-Nishimura I."/>
        </authorList>
    </citation>
    <scope>GENE FAMILY</scope>
    <scope>NOMENCLATURE</scope>
</reference>
<comment type="similarity">
    <text evidence="1 3">Belongs to the jacalin lectin family.</text>
</comment>
<dbReference type="EMBL" id="AB025612">
    <property type="protein sequence ID" value="BAA98152.1"/>
    <property type="molecule type" value="Genomic_DNA"/>
</dbReference>
<dbReference type="EMBL" id="CP002688">
    <property type="protein sequence ID" value="AED95864.1"/>
    <property type="molecule type" value="Genomic_DNA"/>
</dbReference>
<dbReference type="EMBL" id="BT003160">
    <property type="protein sequence ID" value="AAO24592.1"/>
    <property type="molecule type" value="mRNA"/>
</dbReference>
<dbReference type="EMBL" id="AK227703">
    <property type="protein sequence ID" value="BAE99689.1"/>
    <property type="molecule type" value="mRNA"/>
</dbReference>
<dbReference type="RefSeq" id="NP_199796.1">
    <property type="nucleotide sequence ID" value="NM_124363.3"/>
</dbReference>
<dbReference type="SMR" id="Q9LTA8"/>
<dbReference type="FunCoup" id="Q9LTA8">
    <property type="interactions" value="5"/>
</dbReference>
<dbReference type="STRING" id="3702.Q9LTA8"/>
<dbReference type="iPTMnet" id="Q9LTA8"/>
<dbReference type="PaxDb" id="3702-AT5G49850.1"/>
<dbReference type="ProteomicsDB" id="238979"/>
<dbReference type="EnsemblPlants" id="AT5G49850.1">
    <property type="protein sequence ID" value="AT5G49850.1"/>
    <property type="gene ID" value="AT5G49850"/>
</dbReference>
<dbReference type="GeneID" id="835048"/>
<dbReference type="Gramene" id="AT5G49850.1">
    <property type="protein sequence ID" value="AT5G49850.1"/>
    <property type="gene ID" value="AT5G49850"/>
</dbReference>
<dbReference type="KEGG" id="ath:AT5G49850"/>
<dbReference type="Araport" id="AT5G49850"/>
<dbReference type="TAIR" id="AT5G49850"/>
<dbReference type="eggNOG" id="ENOG502SCUZ">
    <property type="taxonomic scope" value="Eukaryota"/>
</dbReference>
<dbReference type="HOGENOM" id="CLU_041730_0_0_1"/>
<dbReference type="InParanoid" id="Q9LTA8"/>
<dbReference type="PhylomeDB" id="Q9LTA8"/>
<dbReference type="PRO" id="PR:Q9LTA8"/>
<dbReference type="Proteomes" id="UP000006548">
    <property type="component" value="Chromosome 5"/>
</dbReference>
<dbReference type="ExpressionAtlas" id="Q9LTA8">
    <property type="expression patterns" value="baseline and differential"/>
</dbReference>
<dbReference type="GO" id="GO:0030246">
    <property type="term" value="F:carbohydrate binding"/>
    <property type="evidence" value="ECO:0007669"/>
    <property type="project" value="UniProtKB-KW"/>
</dbReference>
<dbReference type="CDD" id="cd09612">
    <property type="entry name" value="Jacalin"/>
    <property type="match status" value="4"/>
</dbReference>
<dbReference type="FunFam" id="2.100.10.30:FF:000001">
    <property type="entry name" value="Jacalin-related lectin 33"/>
    <property type="match status" value="3"/>
</dbReference>
<dbReference type="Gene3D" id="2.100.10.30">
    <property type="entry name" value="Jacalin-like lectin domain"/>
    <property type="match status" value="4"/>
</dbReference>
<dbReference type="InterPro" id="IPR001229">
    <property type="entry name" value="Jacalin-like_lectin_dom"/>
</dbReference>
<dbReference type="InterPro" id="IPR033734">
    <property type="entry name" value="Jacalin-like_lectin_dom_plant"/>
</dbReference>
<dbReference type="InterPro" id="IPR036404">
    <property type="entry name" value="Jacalin-like_lectin_dom_sf"/>
</dbReference>
<dbReference type="PANTHER" id="PTHR47293:SF58">
    <property type="entry name" value="JACALIN-RELATED LECTIN 22-RELATED"/>
    <property type="match status" value="1"/>
</dbReference>
<dbReference type="PANTHER" id="PTHR47293">
    <property type="entry name" value="JACALIN-RELATED LECTIN 3"/>
    <property type="match status" value="1"/>
</dbReference>
<dbReference type="Pfam" id="PF01419">
    <property type="entry name" value="Jacalin"/>
    <property type="match status" value="4"/>
</dbReference>
<dbReference type="SMART" id="SM00915">
    <property type="entry name" value="Jacalin"/>
    <property type="match status" value="4"/>
</dbReference>
<dbReference type="SUPFAM" id="SSF51101">
    <property type="entry name" value="Mannose-binding lectins"/>
    <property type="match status" value="4"/>
</dbReference>
<dbReference type="PROSITE" id="PS51752">
    <property type="entry name" value="JACALIN_LECTIN"/>
    <property type="match status" value="4"/>
</dbReference>
<keyword id="KW-0430">Lectin</keyword>
<keyword id="KW-1185">Reference proteome</keyword>
<keyword id="KW-0677">Repeat</keyword>
<sequence>MTERSEALGKDGNRRWDDKSDHDDVTKIYVNYSLMGIESIRFDYVKSGKPIEGPFRGETYNTYTHTFEINHLKNEHLESVEGSYTQRGIQTLQFKTNLRISEPIGYPGKDGIKFILAVEGKKIIGFHGSTYFRLYSLGAYFTRVTPTRIEAIGGKVGTKWDDGVDQAGFTKIHVRSGQEGIQFIKFEYVDKNGRLRDGSIHGSIYRRGSPHVFEIRHVDKEYLVSVEGYYDGDGDCAVIQALRFRTNVKTSQLMGPKTGKKFRLAASGMKIVGFHGYAEKNLTSLGGYFTPIIPTKSECQGVTERSTLWDSGAFEGIRKVSVTWRSYCIRCFRINYENDGKVVKRAHGMNDDSRITDEFVVDYPYEVITSIVGTMNDSYVTSFVFKTSKGRTSRTFGERTSDSVEFVIESKGCAVVGFHGWYAPLGAGYITALGAHFYPMPLPPAAEKLEAQGGAGGVPWDDGSNFERVRKIYIGTCEVGIVSVRFLYENDIEEIVVGDHHGNKNLLRHEEFDLDNACEYLTSVEGSYDVIPGSEDVEVILMLKFTTNKRTSPCYGLDDDPTFVLHKAGHRIIGFHGKSSNMLHKLGIHVLPITDP</sequence>